<organism>
    <name type="scientific">Colwellia maris</name>
    <dbReference type="NCBI Taxonomy" id="77524"/>
    <lineage>
        <taxon>Bacteria</taxon>
        <taxon>Pseudomonadati</taxon>
        <taxon>Pseudomonadota</taxon>
        <taxon>Gammaproteobacteria</taxon>
        <taxon>Alteromonadales</taxon>
        <taxon>Colwelliaceae</taxon>
        <taxon>Colwellia</taxon>
    </lineage>
</organism>
<feature type="initiator methionine" description="Removed" evidence="2 3">
    <location>
        <position position="1"/>
    </location>
</feature>
<feature type="chain" id="PRO_0000083550" description="Isocitrate dehydrogenase [NADP] 1">
    <location>
        <begin position="2"/>
        <end position="415"/>
    </location>
</feature>
<feature type="binding site" evidence="1">
    <location>
        <position position="104"/>
    </location>
    <ligand>
        <name>NADP(+)</name>
        <dbReference type="ChEBI" id="CHEBI:58349"/>
    </ligand>
</feature>
<feature type="binding site" evidence="1">
    <location>
        <position position="113"/>
    </location>
    <ligand>
        <name>D-threo-isocitrate</name>
        <dbReference type="ChEBI" id="CHEBI:15562"/>
    </ligand>
</feature>
<feature type="binding site" evidence="1">
    <location>
        <position position="115"/>
    </location>
    <ligand>
        <name>D-threo-isocitrate</name>
        <dbReference type="ChEBI" id="CHEBI:15562"/>
    </ligand>
</feature>
<feature type="binding site" evidence="1">
    <location>
        <position position="119"/>
    </location>
    <ligand>
        <name>D-threo-isocitrate</name>
        <dbReference type="ChEBI" id="CHEBI:15562"/>
    </ligand>
</feature>
<feature type="binding site" evidence="1">
    <location>
        <position position="129"/>
    </location>
    <ligand>
        <name>D-threo-isocitrate</name>
        <dbReference type="ChEBI" id="CHEBI:15562"/>
    </ligand>
</feature>
<feature type="binding site" evidence="1">
    <location>
        <position position="153"/>
    </location>
    <ligand>
        <name>D-threo-isocitrate</name>
        <dbReference type="ChEBI" id="CHEBI:15562"/>
    </ligand>
</feature>
<feature type="binding site" evidence="1">
    <location>
        <position position="307"/>
    </location>
    <ligand>
        <name>Mg(2+)</name>
        <dbReference type="ChEBI" id="CHEBI:18420"/>
    </ligand>
</feature>
<feature type="binding site" evidence="1">
    <location>
        <begin position="339"/>
        <end position="345"/>
    </location>
    <ligand>
        <name>NADP(+)</name>
        <dbReference type="ChEBI" id="CHEBI:58349"/>
    </ligand>
</feature>
<feature type="binding site" evidence="1">
    <location>
        <position position="352"/>
    </location>
    <ligand>
        <name>NADP(+)</name>
        <dbReference type="ChEBI" id="CHEBI:58349"/>
    </ligand>
</feature>
<feature type="binding site" evidence="1">
    <location>
        <position position="390"/>
    </location>
    <ligand>
        <name>NADP(+)</name>
        <dbReference type="ChEBI" id="CHEBI:58349"/>
    </ligand>
</feature>
<feature type="binding site" evidence="1">
    <location>
        <position position="394"/>
    </location>
    <ligand>
        <name>NADP(+)</name>
        <dbReference type="ChEBI" id="CHEBI:58349"/>
    </ligand>
</feature>
<feature type="site" description="Critical for catalysis" evidence="1">
    <location>
        <position position="160"/>
    </location>
</feature>
<feature type="site" description="Critical for catalysis" evidence="1">
    <location>
        <position position="230"/>
    </location>
</feature>
<feature type="sequence conflict" description="In Ref. 2; AA sequence." evidence="7" ref="2">
    <original>N</original>
    <variation>G</variation>
    <location>
        <position position="26"/>
    </location>
</feature>
<reference key="1">
    <citation type="journal article" date="1993" name="J. Bacteriol.">
        <title>Genes encoding two isocitrate dehydrogenase isozymes of a psychrophilic bacterium, Vibrio sp. strain ABE-1.</title>
        <authorList>
            <person name="Ishii A."/>
            <person name="Suzuki M."/>
            <person name="Sahara T."/>
            <person name="Takada Y."/>
            <person name="Sasaki S."/>
            <person name="Fukunaga N."/>
        </authorList>
    </citation>
    <scope>NUCLEOTIDE SEQUENCE [GENOMIC DNA]</scope>
    <scope>INDUCTION</scope>
</reference>
<reference key="2">
    <citation type="journal article" date="1992" name="J. Biochem.">
        <title>Purification and characterization of monomeric isocitrate dehydrogenase with NADP(+)-specificity from Vibrio parahaemolyticus Y-4.</title>
        <authorList>
            <person name="Fukunaga N."/>
            <person name="Imagawa S."/>
            <person name="Sahara T."/>
            <person name="Ishii A."/>
            <person name="Suzuki M."/>
        </authorList>
    </citation>
    <scope>PROTEIN SEQUENCE OF 2-41</scope>
</reference>
<reference key="3">
    <citation type="journal article" date="1987" name="J. Biochem.">
        <title>Isozymes of isocitrate dehydrogenase from an obligately psychrophilic bacterium, Vibrio sp. strain ABE-1: purification, and modulation of activities by growth conditions.</title>
        <authorList>
            <person name="Ishii A."/>
            <person name="Ochiai T."/>
            <person name="Imagawa S."/>
            <person name="Fukunaga N."/>
            <person name="Sasaki S."/>
            <person name="Minowa O."/>
            <person name="Mizuno Y."/>
            <person name="Shiokawa H."/>
        </authorList>
    </citation>
    <scope>PROTEIN SEQUENCE OF 2-14</scope>
    <scope>SUBUNIT</scope>
    <scope>INDUCTION</scope>
</reference>
<proteinExistence type="evidence at protein level"/>
<evidence type="ECO:0000250" key="1">
    <source>
        <dbReference type="UniProtKB" id="P08200"/>
    </source>
</evidence>
<evidence type="ECO:0000269" key="2">
    <source>
    </source>
</evidence>
<evidence type="ECO:0000269" key="3">
    <source>
    </source>
</evidence>
<evidence type="ECO:0000269" key="4">
    <source>
    </source>
</evidence>
<evidence type="ECO:0000303" key="5">
    <source>
    </source>
</evidence>
<evidence type="ECO:0000303" key="6">
    <source>
    </source>
</evidence>
<evidence type="ECO:0000305" key="7"/>
<evidence type="ECO:0000305" key="8">
    <source>
    </source>
</evidence>
<dbReference type="EC" id="1.1.1.42" evidence="8"/>
<dbReference type="EMBL" id="D14047">
    <property type="protein sequence ID" value="BAA03135.1"/>
    <property type="molecule type" value="Genomic_DNA"/>
</dbReference>
<dbReference type="PIR" id="B49341">
    <property type="entry name" value="B49341"/>
</dbReference>
<dbReference type="SMR" id="P41560"/>
<dbReference type="GO" id="GO:0004450">
    <property type="term" value="F:isocitrate dehydrogenase (NADP+) activity"/>
    <property type="evidence" value="ECO:0007669"/>
    <property type="project" value="UniProtKB-EC"/>
</dbReference>
<dbReference type="GO" id="GO:0000287">
    <property type="term" value="F:magnesium ion binding"/>
    <property type="evidence" value="ECO:0007669"/>
    <property type="project" value="InterPro"/>
</dbReference>
<dbReference type="GO" id="GO:0051287">
    <property type="term" value="F:NAD binding"/>
    <property type="evidence" value="ECO:0007669"/>
    <property type="project" value="InterPro"/>
</dbReference>
<dbReference type="GO" id="GO:0006097">
    <property type="term" value="P:glyoxylate cycle"/>
    <property type="evidence" value="ECO:0007669"/>
    <property type="project" value="UniProtKB-KW"/>
</dbReference>
<dbReference type="GO" id="GO:0006099">
    <property type="term" value="P:tricarboxylic acid cycle"/>
    <property type="evidence" value="ECO:0007669"/>
    <property type="project" value="UniProtKB-KW"/>
</dbReference>
<dbReference type="Gene3D" id="3.40.718.10">
    <property type="entry name" value="Isopropylmalate Dehydrogenase"/>
    <property type="match status" value="1"/>
</dbReference>
<dbReference type="InterPro" id="IPR019818">
    <property type="entry name" value="IsoCit/isopropylmalate_DH_CS"/>
</dbReference>
<dbReference type="InterPro" id="IPR004439">
    <property type="entry name" value="Isocitrate_DH_NADP_dimer_prok"/>
</dbReference>
<dbReference type="InterPro" id="IPR024084">
    <property type="entry name" value="IsoPropMal-DH-like_dom"/>
</dbReference>
<dbReference type="NCBIfam" id="NF005425">
    <property type="entry name" value="PRK07006.1"/>
    <property type="match status" value="1"/>
</dbReference>
<dbReference type="NCBIfam" id="TIGR00183">
    <property type="entry name" value="prok_nadp_idh"/>
    <property type="match status" value="1"/>
</dbReference>
<dbReference type="PANTHER" id="PTHR43504">
    <property type="entry name" value="ISOCITRATE DEHYDROGENASE [NADP]"/>
    <property type="match status" value="1"/>
</dbReference>
<dbReference type="PANTHER" id="PTHR43504:SF1">
    <property type="entry name" value="ISOCITRATE DEHYDROGENASE [NADP]"/>
    <property type="match status" value="1"/>
</dbReference>
<dbReference type="Pfam" id="PF00180">
    <property type="entry name" value="Iso_dh"/>
    <property type="match status" value="1"/>
</dbReference>
<dbReference type="SMART" id="SM01329">
    <property type="entry name" value="Iso_dh"/>
    <property type="match status" value="1"/>
</dbReference>
<dbReference type="SUPFAM" id="SSF53659">
    <property type="entry name" value="Isocitrate/Isopropylmalate dehydrogenase-like"/>
    <property type="match status" value="1"/>
</dbReference>
<dbReference type="PROSITE" id="PS00470">
    <property type="entry name" value="IDH_IMDH"/>
    <property type="match status" value="1"/>
</dbReference>
<comment type="function">
    <text evidence="8">Catalyzes the oxidative decarboxylation of isocitrate to 2-oxoglutarate and carbon dioxide with the concomitant reduction of NADP(+).</text>
</comment>
<comment type="catalytic activity">
    <reaction evidence="8">
        <text>D-threo-isocitrate + NADP(+) = 2-oxoglutarate + CO2 + NADPH</text>
        <dbReference type="Rhea" id="RHEA:19629"/>
        <dbReference type="ChEBI" id="CHEBI:15562"/>
        <dbReference type="ChEBI" id="CHEBI:16526"/>
        <dbReference type="ChEBI" id="CHEBI:16810"/>
        <dbReference type="ChEBI" id="CHEBI:57783"/>
        <dbReference type="ChEBI" id="CHEBI:58349"/>
        <dbReference type="EC" id="1.1.1.42"/>
    </reaction>
</comment>
<comment type="cofactor">
    <cofactor evidence="1">
        <name>Mg(2+)</name>
        <dbReference type="ChEBI" id="CHEBI:18420"/>
    </cofactor>
    <cofactor evidence="1">
        <name>Mn(2+)</name>
        <dbReference type="ChEBI" id="CHEBI:29035"/>
    </cofactor>
    <text evidence="1">Binds 1 Mg(2+) or Mn(2+) ion per subunit.</text>
</comment>
<comment type="subunit">
    <text evidence="3">Homodimer.</text>
</comment>
<comment type="induction">
    <text evidence="3 4">Expression increases when acetate is the sole source of carbon and energy.</text>
</comment>
<comment type="similarity">
    <text evidence="7">Belongs to the isocitrate and isopropylmalate dehydrogenases family.</text>
</comment>
<keyword id="KW-0903">Direct protein sequencing</keyword>
<keyword id="KW-0329">Glyoxylate bypass</keyword>
<keyword id="KW-0460">Magnesium</keyword>
<keyword id="KW-0464">Manganese</keyword>
<keyword id="KW-0479">Metal-binding</keyword>
<keyword id="KW-0521">NADP</keyword>
<keyword id="KW-0560">Oxidoreductase</keyword>
<keyword id="KW-0816">Tricarboxylic acid cycle</keyword>
<sequence length="415" mass="45145">MTNKIIIPTTGDKITFIDGKLSVPNNPIIPYIEGDGIGVDVTPPMLKVVNAAVAKAYGGDRKIEWLEVYAGEKATKMYDSETWLPEETLNILQEYKVSIKGPLTTPVGGGMSSLNVAIRQMLDLYVCQRPVQWFTGVPSPVKRPSEVDMVIFRENTEDIYAGIEYKAGSDKAKSVIKFLIEEMGASNIRFTENCGIGIKPVSKEGSQRLVRQAIQYAIDNNKDSVTLVHKGNIMKFTEGAFKDWGYELAIEEFGASLLHGGPWCSLKNPNTGKEIIIKDVIADAMLQQVLLRPAEYSVIATLNLNGDYLSDALAAQVGGIGIAPGANLGDEVAVFEATHGTAPKYAGKNKVNPGSVILSAEMMLRHMGWLEADLLLKGMSGAIQAKTVTYDFERLMDDATLVSCSAFGDCIIDHM</sequence>
<accession>P41560</accession>
<name>IDH1_COLMA</name>
<gene>
    <name evidence="6" type="primary">icdI</name>
</gene>
<protein>
    <recommendedName>
        <fullName>Isocitrate dehydrogenase [NADP] 1</fullName>
        <ecNumber evidence="8">1.1.1.42</ecNumber>
    </recommendedName>
    <alternativeName>
        <fullName evidence="5">IDH-I</fullName>
    </alternativeName>
    <alternativeName>
        <fullName>IDP-1</fullName>
    </alternativeName>
    <alternativeName>
        <fullName>NADP(+)-specific ICDH 1</fullName>
    </alternativeName>
    <alternativeName>
        <fullName>Oxalosuccinate decarboxylase 1</fullName>
    </alternativeName>
</protein>